<accession>B4EDX1</accession>
<protein>
    <recommendedName>
        <fullName evidence="1">Imidazolonepropionase</fullName>
        <ecNumber evidence="1">3.5.2.7</ecNumber>
    </recommendedName>
    <alternativeName>
        <fullName evidence="1">Imidazolone-5-propionate hydrolase</fullName>
    </alternativeName>
</protein>
<feature type="chain" id="PRO_1000121537" description="Imidazolonepropionase">
    <location>
        <begin position="1"/>
        <end position="407"/>
    </location>
</feature>
<feature type="binding site" evidence="1">
    <location>
        <position position="68"/>
    </location>
    <ligand>
        <name>Fe(3+)</name>
        <dbReference type="ChEBI" id="CHEBI:29034"/>
    </ligand>
</feature>
<feature type="binding site" evidence="1">
    <location>
        <position position="68"/>
    </location>
    <ligand>
        <name>Zn(2+)</name>
        <dbReference type="ChEBI" id="CHEBI:29105"/>
    </ligand>
</feature>
<feature type="binding site" evidence="1">
    <location>
        <position position="70"/>
    </location>
    <ligand>
        <name>Fe(3+)</name>
        <dbReference type="ChEBI" id="CHEBI:29034"/>
    </ligand>
</feature>
<feature type="binding site" evidence="1">
    <location>
        <position position="70"/>
    </location>
    <ligand>
        <name>Zn(2+)</name>
        <dbReference type="ChEBI" id="CHEBI:29105"/>
    </ligand>
</feature>
<feature type="binding site" evidence="1">
    <location>
        <position position="77"/>
    </location>
    <ligand>
        <name>4-imidazolone-5-propanoate</name>
        <dbReference type="ChEBI" id="CHEBI:77893"/>
    </ligand>
</feature>
<feature type="binding site" evidence="1">
    <location>
        <position position="140"/>
    </location>
    <ligand>
        <name>4-imidazolone-5-propanoate</name>
        <dbReference type="ChEBI" id="CHEBI:77893"/>
    </ligand>
</feature>
<feature type="binding site" evidence="1">
    <location>
        <position position="140"/>
    </location>
    <ligand>
        <name>N-formimidoyl-L-glutamate</name>
        <dbReference type="ChEBI" id="CHEBI:58928"/>
    </ligand>
</feature>
<feature type="binding site" evidence="1">
    <location>
        <position position="173"/>
    </location>
    <ligand>
        <name>4-imidazolone-5-propanoate</name>
        <dbReference type="ChEBI" id="CHEBI:77893"/>
    </ligand>
</feature>
<feature type="binding site" evidence="1">
    <location>
        <position position="238"/>
    </location>
    <ligand>
        <name>Fe(3+)</name>
        <dbReference type="ChEBI" id="CHEBI:29034"/>
    </ligand>
</feature>
<feature type="binding site" evidence="1">
    <location>
        <position position="238"/>
    </location>
    <ligand>
        <name>Zn(2+)</name>
        <dbReference type="ChEBI" id="CHEBI:29105"/>
    </ligand>
</feature>
<feature type="binding site" evidence="1">
    <location>
        <position position="241"/>
    </location>
    <ligand>
        <name>4-imidazolone-5-propanoate</name>
        <dbReference type="ChEBI" id="CHEBI:77893"/>
    </ligand>
</feature>
<feature type="binding site" evidence="1">
    <location>
        <position position="313"/>
    </location>
    <ligand>
        <name>Fe(3+)</name>
        <dbReference type="ChEBI" id="CHEBI:29034"/>
    </ligand>
</feature>
<feature type="binding site" evidence="1">
    <location>
        <position position="313"/>
    </location>
    <ligand>
        <name>Zn(2+)</name>
        <dbReference type="ChEBI" id="CHEBI:29105"/>
    </ligand>
</feature>
<feature type="binding site" evidence="1">
    <location>
        <position position="315"/>
    </location>
    <ligand>
        <name>N-formimidoyl-L-glutamate</name>
        <dbReference type="ChEBI" id="CHEBI:58928"/>
    </ligand>
</feature>
<feature type="binding site" evidence="1">
    <location>
        <position position="317"/>
    </location>
    <ligand>
        <name>N-formimidoyl-L-glutamate</name>
        <dbReference type="ChEBI" id="CHEBI:58928"/>
    </ligand>
</feature>
<feature type="binding site" evidence="1">
    <location>
        <position position="318"/>
    </location>
    <ligand>
        <name>4-imidazolone-5-propanoate</name>
        <dbReference type="ChEBI" id="CHEBI:77893"/>
    </ligand>
</feature>
<evidence type="ECO:0000255" key="1">
    <source>
        <dbReference type="HAMAP-Rule" id="MF_00372"/>
    </source>
</evidence>
<dbReference type="EC" id="3.5.2.7" evidence="1"/>
<dbReference type="EMBL" id="AM747720">
    <property type="protein sequence ID" value="CAR52543.1"/>
    <property type="molecule type" value="Genomic_DNA"/>
</dbReference>
<dbReference type="RefSeq" id="WP_006488078.1">
    <property type="nucleotide sequence ID" value="NC_011000.1"/>
</dbReference>
<dbReference type="SMR" id="B4EDX1"/>
<dbReference type="GeneID" id="56558738"/>
<dbReference type="KEGG" id="bcj:BCAL2242"/>
<dbReference type="eggNOG" id="COG1228">
    <property type="taxonomic scope" value="Bacteria"/>
</dbReference>
<dbReference type="HOGENOM" id="CLU_041647_0_0_4"/>
<dbReference type="BioCyc" id="BCEN216591:G1G1V-2468-MONOMER"/>
<dbReference type="UniPathway" id="UPA00379">
    <property type="reaction ID" value="UER00551"/>
</dbReference>
<dbReference type="Proteomes" id="UP000001035">
    <property type="component" value="Chromosome 1"/>
</dbReference>
<dbReference type="GO" id="GO:0005737">
    <property type="term" value="C:cytoplasm"/>
    <property type="evidence" value="ECO:0007669"/>
    <property type="project" value="UniProtKB-SubCell"/>
</dbReference>
<dbReference type="GO" id="GO:0050480">
    <property type="term" value="F:imidazolonepropionase activity"/>
    <property type="evidence" value="ECO:0007669"/>
    <property type="project" value="UniProtKB-UniRule"/>
</dbReference>
<dbReference type="GO" id="GO:0005506">
    <property type="term" value="F:iron ion binding"/>
    <property type="evidence" value="ECO:0007669"/>
    <property type="project" value="UniProtKB-UniRule"/>
</dbReference>
<dbReference type="GO" id="GO:0008270">
    <property type="term" value="F:zinc ion binding"/>
    <property type="evidence" value="ECO:0007669"/>
    <property type="project" value="UniProtKB-UniRule"/>
</dbReference>
<dbReference type="GO" id="GO:0019556">
    <property type="term" value="P:L-histidine catabolic process to glutamate and formamide"/>
    <property type="evidence" value="ECO:0007669"/>
    <property type="project" value="UniProtKB-UniPathway"/>
</dbReference>
<dbReference type="GO" id="GO:0019557">
    <property type="term" value="P:L-histidine catabolic process to glutamate and formate"/>
    <property type="evidence" value="ECO:0007669"/>
    <property type="project" value="UniProtKB-UniPathway"/>
</dbReference>
<dbReference type="CDD" id="cd01296">
    <property type="entry name" value="Imidazolone-5PH"/>
    <property type="match status" value="1"/>
</dbReference>
<dbReference type="FunFam" id="3.20.20.140:FF:000007">
    <property type="entry name" value="Imidazolonepropionase"/>
    <property type="match status" value="1"/>
</dbReference>
<dbReference type="Gene3D" id="3.20.20.140">
    <property type="entry name" value="Metal-dependent hydrolases"/>
    <property type="match status" value="1"/>
</dbReference>
<dbReference type="Gene3D" id="2.30.40.10">
    <property type="entry name" value="Urease, subunit C, domain 1"/>
    <property type="match status" value="1"/>
</dbReference>
<dbReference type="HAMAP" id="MF_00372">
    <property type="entry name" value="HutI"/>
    <property type="match status" value="1"/>
</dbReference>
<dbReference type="InterPro" id="IPR006680">
    <property type="entry name" value="Amidohydro-rel"/>
</dbReference>
<dbReference type="InterPro" id="IPR005920">
    <property type="entry name" value="HutI"/>
</dbReference>
<dbReference type="InterPro" id="IPR011059">
    <property type="entry name" value="Metal-dep_hydrolase_composite"/>
</dbReference>
<dbReference type="InterPro" id="IPR032466">
    <property type="entry name" value="Metal_Hydrolase"/>
</dbReference>
<dbReference type="NCBIfam" id="TIGR01224">
    <property type="entry name" value="hutI"/>
    <property type="match status" value="1"/>
</dbReference>
<dbReference type="PANTHER" id="PTHR42752">
    <property type="entry name" value="IMIDAZOLONEPROPIONASE"/>
    <property type="match status" value="1"/>
</dbReference>
<dbReference type="PANTHER" id="PTHR42752:SF1">
    <property type="entry name" value="IMIDAZOLONEPROPIONASE-RELATED"/>
    <property type="match status" value="1"/>
</dbReference>
<dbReference type="Pfam" id="PF01979">
    <property type="entry name" value="Amidohydro_1"/>
    <property type="match status" value="1"/>
</dbReference>
<dbReference type="SUPFAM" id="SSF51338">
    <property type="entry name" value="Composite domain of metallo-dependent hydrolases"/>
    <property type="match status" value="1"/>
</dbReference>
<dbReference type="SUPFAM" id="SSF51556">
    <property type="entry name" value="Metallo-dependent hydrolases"/>
    <property type="match status" value="1"/>
</dbReference>
<gene>
    <name evidence="1" type="primary">hutI</name>
    <name type="ordered locus">BceJ2315_22040</name>
    <name type="ORF">BCAL2242</name>
</gene>
<keyword id="KW-0963">Cytoplasm</keyword>
<keyword id="KW-0369">Histidine metabolism</keyword>
<keyword id="KW-0378">Hydrolase</keyword>
<keyword id="KW-0408">Iron</keyword>
<keyword id="KW-0479">Metal-binding</keyword>
<keyword id="KW-0862">Zinc</keyword>
<name>HUTI_BURCJ</name>
<reference key="1">
    <citation type="journal article" date="2009" name="J. Bacteriol.">
        <title>The genome of Burkholderia cenocepacia J2315, an epidemic pathogen of cystic fibrosis patients.</title>
        <authorList>
            <person name="Holden M.T."/>
            <person name="Seth-Smith H.M."/>
            <person name="Crossman L.C."/>
            <person name="Sebaihia M."/>
            <person name="Bentley S.D."/>
            <person name="Cerdeno-Tarraga A.M."/>
            <person name="Thomson N.R."/>
            <person name="Bason N."/>
            <person name="Quail M.A."/>
            <person name="Sharp S."/>
            <person name="Cherevach I."/>
            <person name="Churcher C."/>
            <person name="Goodhead I."/>
            <person name="Hauser H."/>
            <person name="Holroyd N."/>
            <person name="Mungall K."/>
            <person name="Scott P."/>
            <person name="Walker D."/>
            <person name="White B."/>
            <person name="Rose H."/>
            <person name="Iversen P."/>
            <person name="Mil-Homens D."/>
            <person name="Rocha E.P."/>
            <person name="Fialho A.M."/>
            <person name="Baldwin A."/>
            <person name="Dowson C."/>
            <person name="Barrell B.G."/>
            <person name="Govan J.R."/>
            <person name="Vandamme P."/>
            <person name="Hart C.A."/>
            <person name="Mahenthiralingam E."/>
            <person name="Parkhill J."/>
        </authorList>
    </citation>
    <scope>NUCLEOTIDE SEQUENCE [LARGE SCALE GENOMIC DNA]</scope>
    <source>
        <strain>ATCC BAA-245 / DSM 16553 / LMG 16656 / NCTC 13227 / J2315 / CF5610</strain>
    </source>
</reference>
<proteinExistence type="inferred from homology"/>
<sequence length="407" mass="44082">MKPTVWHHLRLCPHGHPDETIDDAAIAVDETGTIAWLGALSALPHGYAHWRREDLHGAWVTPGLVDCHTHLVYGGTRADEFAQRLAGVSYEEIARQGGGIVSTVRATRAADETTLFVQAAARLQPLLAEGVTAIEIKSGYGLDLASERKMLRVARQLGERFPVTVHTTFLGAHALPPEYAGRADAYIDEVCDRMLPTLADEGLVDAVDVFCERIGFSLAQTERVFEAATRRGLPVKLHAEQLSNAGGTALAARYRALSADHLEFLDEAGIEAMKAAGTVAVLLPGAYYFIRETQLPPIELLRKHGVPIALATDHNPGTSPLESLLLTLNMGCTLFRMTVPEVLQGVTRHAAAALGRADRHGALEVGRQADFAVWSVGSLAELAYWIGRPLCEQVVRGGTTVFRRMNG</sequence>
<organism>
    <name type="scientific">Burkholderia cenocepacia (strain ATCC BAA-245 / DSM 16553 / LMG 16656 / NCTC 13227 / J2315 / CF5610)</name>
    <name type="common">Burkholderia cepacia (strain J2315)</name>
    <dbReference type="NCBI Taxonomy" id="216591"/>
    <lineage>
        <taxon>Bacteria</taxon>
        <taxon>Pseudomonadati</taxon>
        <taxon>Pseudomonadota</taxon>
        <taxon>Betaproteobacteria</taxon>
        <taxon>Burkholderiales</taxon>
        <taxon>Burkholderiaceae</taxon>
        <taxon>Burkholderia</taxon>
        <taxon>Burkholderia cepacia complex</taxon>
    </lineage>
</organism>
<comment type="function">
    <text evidence="1">Catalyzes the hydrolytic cleavage of the carbon-nitrogen bond in imidazolone-5-propanoate to yield N-formimidoyl-L-glutamate. It is the third step in the universal histidine degradation pathway.</text>
</comment>
<comment type="catalytic activity">
    <reaction evidence="1">
        <text>4-imidazolone-5-propanoate + H2O = N-formimidoyl-L-glutamate</text>
        <dbReference type="Rhea" id="RHEA:23660"/>
        <dbReference type="ChEBI" id="CHEBI:15377"/>
        <dbReference type="ChEBI" id="CHEBI:58928"/>
        <dbReference type="ChEBI" id="CHEBI:77893"/>
        <dbReference type="EC" id="3.5.2.7"/>
    </reaction>
</comment>
<comment type="cofactor">
    <cofactor evidence="1">
        <name>Zn(2+)</name>
        <dbReference type="ChEBI" id="CHEBI:29105"/>
    </cofactor>
    <cofactor evidence="1">
        <name>Fe(3+)</name>
        <dbReference type="ChEBI" id="CHEBI:29034"/>
    </cofactor>
    <text evidence="1">Binds 1 zinc or iron ion per subunit.</text>
</comment>
<comment type="pathway">
    <text evidence="1">Amino-acid degradation; L-histidine degradation into L-glutamate; N-formimidoyl-L-glutamate from L-histidine: step 3/3.</text>
</comment>
<comment type="subcellular location">
    <subcellularLocation>
        <location evidence="1">Cytoplasm</location>
    </subcellularLocation>
</comment>
<comment type="similarity">
    <text evidence="1">Belongs to the metallo-dependent hydrolases superfamily. HutI family.</text>
</comment>